<sequence>MSNLLVELFVEELPPKALQNIGISFADQIYHSLVTQDLIEPPSELDAANPSPWKWFASPRRIAVWIRNVTQKAPDKQLAQKLMPASVGLDADGNATPALLKKLAALGADESAVSQLKREHDGKAEVLLLDRTVRGATLAEGLQKALDEAIAKLPIPKVMTYQLEDGWSNVNFVRPAHGLVALHGNEVVPIRALGLTAGNRTQGHRFEATQSPIVLRNADSYAEQLQQDGAVIPGFKERRDEIARQLEAAAGKLKLRPIEDEALLEEVTALVERPNVLVGQFEQAFLAVPQECLILTMKANQKYFPLLDAQGRLTNKFLIVSNISPADPSAVVGGNERVVRPRLADAKFFFEQDRKKTLESRIPGLSKVVYHNKLGSQGERIARVSEIANLVGTALGDQTLAAQASQAAQLAKADLVTDMVGEFPELQGIMGRYYAQHEGLSDDIAYAIEDHYRPRFSGDALPRNKVGMIVALADKLETLAGLFSIGEKPTGEKDPFALRRHAIGILRILTEGGLSLPLNTLLEQTLSVFQHEFDHDTALQAVEEFIFDRLSGSLRDQGYSVQEVDAVLAMKPQLLGDITKRLEAVRAFASLPEAASLAAANKRVGNILKKSDSAIEAAINPALLQEDAEKTLAQALAQVQPQAQQAFAAGDYTGSLKALAALKAPVDAFFDHVMVNAEDPALKTNRLALLATLHQAMNQVADLSRLAA</sequence>
<organism>
    <name type="scientific">Methylobacillus flagellatus (strain ATCC 51484 / DSM 6875 / VKM B-1610 / KT)</name>
    <dbReference type="NCBI Taxonomy" id="265072"/>
    <lineage>
        <taxon>Bacteria</taxon>
        <taxon>Pseudomonadati</taxon>
        <taxon>Pseudomonadota</taxon>
        <taxon>Betaproteobacteria</taxon>
        <taxon>Nitrosomonadales</taxon>
        <taxon>Methylophilaceae</taxon>
        <taxon>Methylobacillus</taxon>
    </lineage>
</organism>
<protein>
    <recommendedName>
        <fullName evidence="1">Glycine--tRNA ligase beta subunit</fullName>
        <ecNumber evidence="1">6.1.1.14</ecNumber>
    </recommendedName>
    <alternativeName>
        <fullName evidence="1">Glycyl-tRNA synthetase beta subunit</fullName>
        <shortName evidence="1">GlyRS</shortName>
    </alternativeName>
</protein>
<comment type="catalytic activity">
    <reaction evidence="1">
        <text>tRNA(Gly) + glycine + ATP = glycyl-tRNA(Gly) + AMP + diphosphate</text>
        <dbReference type="Rhea" id="RHEA:16013"/>
        <dbReference type="Rhea" id="RHEA-COMP:9664"/>
        <dbReference type="Rhea" id="RHEA-COMP:9683"/>
        <dbReference type="ChEBI" id="CHEBI:30616"/>
        <dbReference type="ChEBI" id="CHEBI:33019"/>
        <dbReference type="ChEBI" id="CHEBI:57305"/>
        <dbReference type="ChEBI" id="CHEBI:78442"/>
        <dbReference type="ChEBI" id="CHEBI:78522"/>
        <dbReference type="ChEBI" id="CHEBI:456215"/>
        <dbReference type="EC" id="6.1.1.14"/>
    </reaction>
</comment>
<comment type="subunit">
    <text evidence="1">Tetramer of two alpha and two beta subunits.</text>
</comment>
<comment type="subcellular location">
    <subcellularLocation>
        <location evidence="1">Cytoplasm</location>
    </subcellularLocation>
</comment>
<comment type="similarity">
    <text evidence="1">Belongs to the class-II aminoacyl-tRNA synthetase family.</text>
</comment>
<reference key="1">
    <citation type="submission" date="2006-03" db="EMBL/GenBank/DDBJ databases">
        <title>Complete sequence of Methylobacillus flagellatus KT.</title>
        <authorList>
            <consortium name="US DOE Joint Genome Institute"/>
            <person name="Copeland A."/>
            <person name="Lucas S."/>
            <person name="Lapidus A."/>
            <person name="Barry K."/>
            <person name="Detter J.C."/>
            <person name="Glavina del Rio T."/>
            <person name="Hammon N."/>
            <person name="Israni S."/>
            <person name="Dalin E."/>
            <person name="Tice H."/>
            <person name="Pitluck S."/>
            <person name="Brettin T."/>
            <person name="Bruce D."/>
            <person name="Han C."/>
            <person name="Tapia R."/>
            <person name="Saunders E."/>
            <person name="Gilna P."/>
            <person name="Schmutz J."/>
            <person name="Larimer F."/>
            <person name="Land M."/>
            <person name="Kyrpides N."/>
            <person name="Anderson I."/>
            <person name="Richardson P."/>
        </authorList>
    </citation>
    <scope>NUCLEOTIDE SEQUENCE [LARGE SCALE GENOMIC DNA]</scope>
    <source>
        <strain>ATCC 51484 / DSM 6875 / VKM B-1610 / KT</strain>
    </source>
</reference>
<accession>Q1H3M3</accession>
<dbReference type="EC" id="6.1.1.14" evidence="1"/>
<dbReference type="EMBL" id="CP000284">
    <property type="protein sequence ID" value="ABE48914.1"/>
    <property type="molecule type" value="Genomic_DNA"/>
</dbReference>
<dbReference type="RefSeq" id="WP_011479011.1">
    <property type="nucleotide sequence ID" value="NC_007947.1"/>
</dbReference>
<dbReference type="SMR" id="Q1H3M3"/>
<dbReference type="STRING" id="265072.Mfla_0644"/>
<dbReference type="KEGG" id="mfa:Mfla_0644"/>
<dbReference type="eggNOG" id="COG0751">
    <property type="taxonomic scope" value="Bacteria"/>
</dbReference>
<dbReference type="HOGENOM" id="CLU_007220_2_2_4"/>
<dbReference type="OrthoDB" id="9775440at2"/>
<dbReference type="Proteomes" id="UP000002440">
    <property type="component" value="Chromosome"/>
</dbReference>
<dbReference type="GO" id="GO:0005829">
    <property type="term" value="C:cytosol"/>
    <property type="evidence" value="ECO:0007669"/>
    <property type="project" value="TreeGrafter"/>
</dbReference>
<dbReference type="GO" id="GO:0004814">
    <property type="term" value="F:arginine-tRNA ligase activity"/>
    <property type="evidence" value="ECO:0007669"/>
    <property type="project" value="InterPro"/>
</dbReference>
<dbReference type="GO" id="GO:0005524">
    <property type="term" value="F:ATP binding"/>
    <property type="evidence" value="ECO:0007669"/>
    <property type="project" value="UniProtKB-UniRule"/>
</dbReference>
<dbReference type="GO" id="GO:0004820">
    <property type="term" value="F:glycine-tRNA ligase activity"/>
    <property type="evidence" value="ECO:0007669"/>
    <property type="project" value="UniProtKB-UniRule"/>
</dbReference>
<dbReference type="GO" id="GO:0006420">
    <property type="term" value="P:arginyl-tRNA aminoacylation"/>
    <property type="evidence" value="ECO:0007669"/>
    <property type="project" value="InterPro"/>
</dbReference>
<dbReference type="GO" id="GO:0006426">
    <property type="term" value="P:glycyl-tRNA aminoacylation"/>
    <property type="evidence" value="ECO:0007669"/>
    <property type="project" value="UniProtKB-UniRule"/>
</dbReference>
<dbReference type="Gene3D" id="1.10.730.10">
    <property type="entry name" value="Isoleucyl-tRNA Synthetase, Domain 1"/>
    <property type="match status" value="1"/>
</dbReference>
<dbReference type="HAMAP" id="MF_00255">
    <property type="entry name" value="Gly_tRNA_synth_beta"/>
    <property type="match status" value="1"/>
</dbReference>
<dbReference type="InterPro" id="IPR008909">
    <property type="entry name" value="DALR_anticod-bd"/>
</dbReference>
<dbReference type="InterPro" id="IPR015944">
    <property type="entry name" value="Gly-tRNA-synth_bsu"/>
</dbReference>
<dbReference type="InterPro" id="IPR006194">
    <property type="entry name" value="Gly-tRNA-synth_heterodimer"/>
</dbReference>
<dbReference type="NCBIfam" id="TIGR00211">
    <property type="entry name" value="glyS"/>
    <property type="match status" value="1"/>
</dbReference>
<dbReference type="PANTHER" id="PTHR30075:SF2">
    <property type="entry name" value="GLYCINE--TRNA LIGASE, CHLOROPLASTIC_MITOCHONDRIAL 2"/>
    <property type="match status" value="1"/>
</dbReference>
<dbReference type="PANTHER" id="PTHR30075">
    <property type="entry name" value="GLYCYL-TRNA SYNTHETASE"/>
    <property type="match status" value="1"/>
</dbReference>
<dbReference type="Pfam" id="PF05746">
    <property type="entry name" value="DALR_1"/>
    <property type="match status" value="1"/>
</dbReference>
<dbReference type="Pfam" id="PF02092">
    <property type="entry name" value="tRNA_synt_2f"/>
    <property type="match status" value="1"/>
</dbReference>
<dbReference type="PRINTS" id="PR01045">
    <property type="entry name" value="TRNASYNTHGB"/>
</dbReference>
<dbReference type="SMART" id="SM00836">
    <property type="entry name" value="DALR_1"/>
    <property type="match status" value="1"/>
</dbReference>
<dbReference type="SUPFAM" id="SSF109604">
    <property type="entry name" value="HD-domain/PDEase-like"/>
    <property type="match status" value="1"/>
</dbReference>
<dbReference type="PROSITE" id="PS50861">
    <property type="entry name" value="AA_TRNA_LIGASE_II_GLYAB"/>
    <property type="match status" value="1"/>
</dbReference>
<gene>
    <name evidence="1" type="primary">glyS</name>
    <name type="ordered locus">Mfla_0644</name>
</gene>
<proteinExistence type="inferred from homology"/>
<keyword id="KW-0030">Aminoacyl-tRNA synthetase</keyword>
<keyword id="KW-0067">ATP-binding</keyword>
<keyword id="KW-0963">Cytoplasm</keyword>
<keyword id="KW-0436">Ligase</keyword>
<keyword id="KW-0547">Nucleotide-binding</keyword>
<keyword id="KW-0648">Protein biosynthesis</keyword>
<keyword id="KW-1185">Reference proteome</keyword>
<feature type="chain" id="PRO_1000101300" description="Glycine--tRNA ligase beta subunit">
    <location>
        <begin position="1"/>
        <end position="708"/>
    </location>
</feature>
<name>SYGB_METFK</name>
<evidence type="ECO:0000255" key="1">
    <source>
        <dbReference type="HAMAP-Rule" id="MF_00255"/>
    </source>
</evidence>